<comment type="catalytic activity">
    <reaction evidence="2">
        <text>GTP + H2O = 7,8-dihydroneopterin 3'-triphosphate + formate + H(+)</text>
        <dbReference type="Rhea" id="RHEA:17473"/>
        <dbReference type="ChEBI" id="CHEBI:15377"/>
        <dbReference type="ChEBI" id="CHEBI:15378"/>
        <dbReference type="ChEBI" id="CHEBI:15740"/>
        <dbReference type="ChEBI" id="CHEBI:37565"/>
        <dbReference type="ChEBI" id="CHEBI:58462"/>
        <dbReference type="EC" id="3.5.4.16"/>
    </reaction>
</comment>
<comment type="pathway">
    <text evidence="2">Cofactor biosynthesis; 7,8-dihydroneopterin triphosphate biosynthesis; 7,8-dihydroneopterin triphosphate from GTP: step 1/1.</text>
</comment>
<comment type="subunit">
    <text evidence="1">Toroid-shaped homodecamer, composed of two pentamers of five dimers.</text>
</comment>
<comment type="similarity">
    <text evidence="2">Belongs to the GTP cyclohydrolase I family.</text>
</comment>
<feature type="chain" id="PRO_0000119391" description="GTP cyclohydrolase 1">
    <location>
        <begin position="1"/>
        <end position="213"/>
    </location>
</feature>
<feature type="binding site" evidence="2">
    <location>
        <position position="104"/>
    </location>
    <ligand>
        <name>Zn(2+)</name>
        <dbReference type="ChEBI" id="CHEBI:29105"/>
    </ligand>
</feature>
<feature type="binding site" evidence="2">
    <location>
        <position position="107"/>
    </location>
    <ligand>
        <name>Zn(2+)</name>
        <dbReference type="ChEBI" id="CHEBI:29105"/>
    </ligand>
</feature>
<feature type="binding site" evidence="2">
    <location>
        <position position="175"/>
    </location>
    <ligand>
        <name>Zn(2+)</name>
        <dbReference type="ChEBI" id="CHEBI:29105"/>
    </ligand>
</feature>
<name>GCH1_BRUSU</name>
<dbReference type="EC" id="3.5.4.16" evidence="2"/>
<dbReference type="EMBL" id="AE014291">
    <property type="protein sequence ID" value="AAN29995.1"/>
    <property type="molecule type" value="Genomic_DNA"/>
</dbReference>
<dbReference type="EMBL" id="CP002997">
    <property type="protein sequence ID" value="AEM18413.1"/>
    <property type="molecule type" value="Genomic_DNA"/>
</dbReference>
<dbReference type="RefSeq" id="WP_004690854.1">
    <property type="nucleotide sequence ID" value="NZ_KN046804.1"/>
</dbReference>
<dbReference type="SMR" id="Q8G0L4"/>
<dbReference type="GeneID" id="55590763"/>
<dbReference type="KEGG" id="bms:BR1075"/>
<dbReference type="KEGG" id="bsi:BS1330_I1071"/>
<dbReference type="PATRIC" id="fig|204722.21.peg.3682"/>
<dbReference type="HOGENOM" id="CLU_049768_3_1_5"/>
<dbReference type="PhylomeDB" id="Q8G0L4"/>
<dbReference type="UniPathway" id="UPA00848">
    <property type="reaction ID" value="UER00151"/>
</dbReference>
<dbReference type="Proteomes" id="UP000007104">
    <property type="component" value="Chromosome I"/>
</dbReference>
<dbReference type="GO" id="GO:0005737">
    <property type="term" value="C:cytoplasm"/>
    <property type="evidence" value="ECO:0007669"/>
    <property type="project" value="TreeGrafter"/>
</dbReference>
<dbReference type="GO" id="GO:0005525">
    <property type="term" value="F:GTP binding"/>
    <property type="evidence" value="ECO:0007669"/>
    <property type="project" value="UniProtKB-KW"/>
</dbReference>
<dbReference type="GO" id="GO:0003934">
    <property type="term" value="F:GTP cyclohydrolase I activity"/>
    <property type="evidence" value="ECO:0007669"/>
    <property type="project" value="UniProtKB-UniRule"/>
</dbReference>
<dbReference type="GO" id="GO:0008270">
    <property type="term" value="F:zinc ion binding"/>
    <property type="evidence" value="ECO:0007669"/>
    <property type="project" value="UniProtKB-UniRule"/>
</dbReference>
<dbReference type="GO" id="GO:0006730">
    <property type="term" value="P:one-carbon metabolic process"/>
    <property type="evidence" value="ECO:0007669"/>
    <property type="project" value="UniProtKB-UniRule"/>
</dbReference>
<dbReference type="GO" id="GO:0006729">
    <property type="term" value="P:tetrahydrobiopterin biosynthetic process"/>
    <property type="evidence" value="ECO:0007669"/>
    <property type="project" value="TreeGrafter"/>
</dbReference>
<dbReference type="GO" id="GO:0046654">
    <property type="term" value="P:tetrahydrofolate biosynthetic process"/>
    <property type="evidence" value="ECO:0007669"/>
    <property type="project" value="UniProtKB-UniRule"/>
</dbReference>
<dbReference type="FunFam" id="1.10.286.10:FF:000001">
    <property type="entry name" value="GTP cyclohydrolase 1"/>
    <property type="match status" value="1"/>
</dbReference>
<dbReference type="FunFam" id="3.30.1130.10:FF:000001">
    <property type="entry name" value="GTP cyclohydrolase 1"/>
    <property type="match status" value="1"/>
</dbReference>
<dbReference type="Gene3D" id="1.10.286.10">
    <property type="match status" value="1"/>
</dbReference>
<dbReference type="Gene3D" id="3.30.1130.10">
    <property type="match status" value="1"/>
</dbReference>
<dbReference type="HAMAP" id="MF_00223">
    <property type="entry name" value="FolE"/>
    <property type="match status" value="1"/>
</dbReference>
<dbReference type="InterPro" id="IPR043133">
    <property type="entry name" value="GTP-CH-I_C/QueF"/>
</dbReference>
<dbReference type="InterPro" id="IPR043134">
    <property type="entry name" value="GTP-CH-I_N"/>
</dbReference>
<dbReference type="InterPro" id="IPR001474">
    <property type="entry name" value="GTP_CycHdrlase_I"/>
</dbReference>
<dbReference type="InterPro" id="IPR018234">
    <property type="entry name" value="GTP_CycHdrlase_I_CS"/>
</dbReference>
<dbReference type="InterPro" id="IPR020602">
    <property type="entry name" value="GTP_CycHdrlase_I_dom"/>
</dbReference>
<dbReference type="NCBIfam" id="TIGR00063">
    <property type="entry name" value="folE"/>
    <property type="match status" value="1"/>
</dbReference>
<dbReference type="NCBIfam" id="NF006825">
    <property type="entry name" value="PRK09347.1-2"/>
    <property type="match status" value="1"/>
</dbReference>
<dbReference type="NCBIfam" id="NF006826">
    <property type="entry name" value="PRK09347.1-3"/>
    <property type="match status" value="1"/>
</dbReference>
<dbReference type="PANTHER" id="PTHR11109:SF7">
    <property type="entry name" value="GTP CYCLOHYDROLASE 1"/>
    <property type="match status" value="1"/>
</dbReference>
<dbReference type="PANTHER" id="PTHR11109">
    <property type="entry name" value="GTP CYCLOHYDROLASE I"/>
    <property type="match status" value="1"/>
</dbReference>
<dbReference type="Pfam" id="PF01227">
    <property type="entry name" value="GTP_cyclohydroI"/>
    <property type="match status" value="1"/>
</dbReference>
<dbReference type="SUPFAM" id="SSF55620">
    <property type="entry name" value="Tetrahydrobiopterin biosynthesis enzymes-like"/>
    <property type="match status" value="1"/>
</dbReference>
<dbReference type="PROSITE" id="PS00859">
    <property type="entry name" value="GTP_CYCLOHYDROL_1_1"/>
    <property type="match status" value="1"/>
</dbReference>
<proteinExistence type="inferred from homology"/>
<sequence length="213" mass="23794">MDARILQDNDDTSLPVNQASVTRIHKKPGKAEAEAAVRTLLLWAGEDPDREGLLETPKRVAKAYQELFGGYSESPEEVLGTTFEEVAGYDDMVLVKDISFFSHCEHHMVPIIGKAHVAYLPEGRVVGLSKIARVVDIFARRLQTQESITAQIADSMQRILKPRGVAVMIEAEHMCMAMRSIRKQGSSTITTTFTGDFKEKADQQVRFMTLIRT</sequence>
<accession>Q8G0L4</accession>
<accession>G0K9Z7</accession>
<organism>
    <name type="scientific">Brucella suis biovar 1 (strain 1330)</name>
    <dbReference type="NCBI Taxonomy" id="204722"/>
    <lineage>
        <taxon>Bacteria</taxon>
        <taxon>Pseudomonadati</taxon>
        <taxon>Pseudomonadota</taxon>
        <taxon>Alphaproteobacteria</taxon>
        <taxon>Hyphomicrobiales</taxon>
        <taxon>Brucellaceae</taxon>
        <taxon>Brucella/Ochrobactrum group</taxon>
        <taxon>Brucella</taxon>
    </lineage>
</organism>
<gene>
    <name evidence="2" type="primary">folE</name>
    <name type="ordered locus">BR1075</name>
    <name type="ordered locus">BS1330_I1071</name>
</gene>
<evidence type="ECO:0000250" key="1"/>
<evidence type="ECO:0000255" key="2">
    <source>
        <dbReference type="HAMAP-Rule" id="MF_00223"/>
    </source>
</evidence>
<reference key="1">
    <citation type="journal article" date="2002" name="Proc. Natl. Acad. Sci. U.S.A.">
        <title>The Brucella suis genome reveals fundamental similarities between animal and plant pathogens and symbionts.</title>
        <authorList>
            <person name="Paulsen I.T."/>
            <person name="Seshadri R."/>
            <person name="Nelson K.E."/>
            <person name="Eisen J.A."/>
            <person name="Heidelberg J.F."/>
            <person name="Read T.D."/>
            <person name="Dodson R.J."/>
            <person name="Umayam L.A."/>
            <person name="Brinkac L.M."/>
            <person name="Beanan M.J."/>
            <person name="Daugherty S.C."/>
            <person name="DeBoy R.T."/>
            <person name="Durkin A.S."/>
            <person name="Kolonay J.F."/>
            <person name="Madupu R."/>
            <person name="Nelson W.C."/>
            <person name="Ayodeji B."/>
            <person name="Kraul M."/>
            <person name="Shetty J."/>
            <person name="Malek J.A."/>
            <person name="Van Aken S.E."/>
            <person name="Riedmuller S."/>
            <person name="Tettelin H."/>
            <person name="Gill S.R."/>
            <person name="White O."/>
            <person name="Salzberg S.L."/>
            <person name="Hoover D.L."/>
            <person name="Lindler L.E."/>
            <person name="Halling S.M."/>
            <person name="Boyle S.M."/>
            <person name="Fraser C.M."/>
        </authorList>
    </citation>
    <scope>NUCLEOTIDE SEQUENCE [LARGE SCALE GENOMIC DNA]</scope>
    <source>
        <strain>1330</strain>
    </source>
</reference>
<reference key="2">
    <citation type="journal article" date="2011" name="J. Bacteriol.">
        <title>Revised genome sequence of Brucella suis 1330.</title>
        <authorList>
            <person name="Tae H."/>
            <person name="Shallom S."/>
            <person name="Settlage R."/>
            <person name="Preston D."/>
            <person name="Adams L.G."/>
            <person name="Garner H.R."/>
        </authorList>
    </citation>
    <scope>NUCLEOTIDE SEQUENCE [LARGE SCALE GENOMIC DNA]</scope>
    <source>
        <strain>1330</strain>
    </source>
</reference>
<keyword id="KW-0342">GTP-binding</keyword>
<keyword id="KW-0378">Hydrolase</keyword>
<keyword id="KW-0479">Metal-binding</keyword>
<keyword id="KW-0547">Nucleotide-binding</keyword>
<keyword id="KW-0554">One-carbon metabolism</keyword>
<keyword id="KW-0862">Zinc</keyword>
<protein>
    <recommendedName>
        <fullName evidence="2">GTP cyclohydrolase 1</fullName>
        <ecNumber evidence="2">3.5.4.16</ecNumber>
    </recommendedName>
    <alternativeName>
        <fullName evidence="2">GTP cyclohydrolase I</fullName>
        <shortName evidence="2">GTP-CH-I</shortName>
    </alternativeName>
</protein>